<proteinExistence type="evidence at protein level"/>
<evidence type="ECO:0000250" key="1"/>
<evidence type="ECO:0000255" key="2">
    <source>
        <dbReference type="PROSITE-ProRule" id="PRU00159"/>
    </source>
</evidence>
<evidence type="ECO:0000255" key="3">
    <source>
        <dbReference type="PROSITE-ProRule" id="PRU10027"/>
    </source>
</evidence>
<evidence type="ECO:0000256" key="4">
    <source>
        <dbReference type="SAM" id="MobiDB-lite"/>
    </source>
</evidence>
<evidence type="ECO:0000269" key="5">
    <source>
    </source>
</evidence>
<evidence type="ECO:0000305" key="6"/>
<evidence type="ECO:0000305" key="7">
    <source>
    </source>
</evidence>
<accession>P27638</accession>
<dbReference type="EC" id="2.7.11.24"/>
<dbReference type="EMBL" id="D31735">
    <property type="protein sequence ID" value="BAA06536.1"/>
    <property type="molecule type" value="Genomic_DNA"/>
</dbReference>
<dbReference type="EMBL" id="X57334">
    <property type="protein sequence ID" value="CAA40610.1"/>
    <property type="molecule type" value="Genomic_DNA"/>
</dbReference>
<dbReference type="EMBL" id="AB084886">
    <property type="protein sequence ID" value="BAC54906.1"/>
    <property type="molecule type" value="mRNA"/>
</dbReference>
<dbReference type="EMBL" id="AB084887">
    <property type="protein sequence ID" value="BAC54907.1"/>
    <property type="molecule type" value="mRNA"/>
</dbReference>
<dbReference type="EMBL" id="CU329670">
    <property type="protein sequence ID" value="CAB11693.1"/>
    <property type="molecule type" value="Genomic_DNA"/>
</dbReference>
<dbReference type="EMBL" id="AB004551">
    <property type="protein sequence ID" value="BAA20417.1"/>
    <property type="molecule type" value="Genomic_DNA"/>
</dbReference>
<dbReference type="PIR" id="S15663">
    <property type="entry name" value="S15663"/>
</dbReference>
<dbReference type="RefSeq" id="NP_594009.1">
    <property type="nucleotide sequence ID" value="NM_001019435.2"/>
</dbReference>
<dbReference type="SMR" id="P27638"/>
<dbReference type="BioGRID" id="278934">
    <property type="interactions" value="19"/>
</dbReference>
<dbReference type="FunCoup" id="P27638">
    <property type="interactions" value="769"/>
</dbReference>
<dbReference type="IntAct" id="P27638">
    <property type="interactions" value="3"/>
</dbReference>
<dbReference type="STRING" id="284812.P27638"/>
<dbReference type="iPTMnet" id="P27638"/>
<dbReference type="PaxDb" id="4896-SPAC31G5.09c.1"/>
<dbReference type="EnsemblFungi" id="SPAC31G5.09c.1">
    <property type="protein sequence ID" value="SPAC31G5.09c.1:pep"/>
    <property type="gene ID" value="SPAC31G5.09c"/>
</dbReference>
<dbReference type="GeneID" id="2542474"/>
<dbReference type="KEGG" id="spo:2542474"/>
<dbReference type="PomBase" id="SPAC31G5.09c">
    <property type="gene designation" value="spk1"/>
</dbReference>
<dbReference type="VEuPathDB" id="FungiDB:SPAC31G5.09c"/>
<dbReference type="eggNOG" id="KOG0660">
    <property type="taxonomic scope" value="Eukaryota"/>
</dbReference>
<dbReference type="HOGENOM" id="CLU_000288_181_1_1"/>
<dbReference type="InParanoid" id="P27638"/>
<dbReference type="OMA" id="IAMMRFF"/>
<dbReference type="PhylomeDB" id="P27638"/>
<dbReference type="BRENDA" id="2.7.11.24">
    <property type="organism ID" value="5613"/>
</dbReference>
<dbReference type="Reactome" id="R-SPO-110056">
    <property type="pathway name" value="MAPK3 (ERK1) activation"/>
</dbReference>
<dbReference type="Reactome" id="R-SPO-111995">
    <property type="pathway name" value="phospho-PLA2 pathway"/>
</dbReference>
<dbReference type="Reactome" id="R-SPO-112409">
    <property type="pathway name" value="RAF-independent MAPK1/3 activation"/>
</dbReference>
<dbReference type="Reactome" id="R-SPO-112411">
    <property type="pathway name" value="MAPK1 (ERK2) activation"/>
</dbReference>
<dbReference type="Reactome" id="R-SPO-170968">
    <property type="pathway name" value="Frs2-mediated activation"/>
</dbReference>
<dbReference type="Reactome" id="R-SPO-198753">
    <property type="pathway name" value="ERK/MAPK targets"/>
</dbReference>
<dbReference type="Reactome" id="R-SPO-198765">
    <property type="pathway name" value="Signalling to ERK5"/>
</dbReference>
<dbReference type="Reactome" id="R-SPO-202670">
    <property type="pathway name" value="ERKs are inactivated"/>
</dbReference>
<dbReference type="Reactome" id="R-SPO-2559582">
    <property type="pathway name" value="Senescence-Associated Secretory Phenotype (SASP)"/>
</dbReference>
<dbReference type="Reactome" id="R-SPO-3371453">
    <property type="pathway name" value="Regulation of HSF1-mediated heat shock response"/>
</dbReference>
<dbReference type="Reactome" id="R-SPO-375165">
    <property type="pathway name" value="NCAM signaling for neurite out-growth"/>
</dbReference>
<dbReference type="Reactome" id="R-SPO-4086398">
    <property type="pathway name" value="Ca2+ pathway"/>
</dbReference>
<dbReference type="Reactome" id="R-SPO-437239">
    <property type="pathway name" value="Recycling pathway of L1"/>
</dbReference>
<dbReference type="Reactome" id="R-SPO-445144">
    <property type="pathway name" value="Signal transduction by L1"/>
</dbReference>
<dbReference type="Reactome" id="R-SPO-450341">
    <property type="pathway name" value="Activation of the AP-1 family of transcription factors"/>
</dbReference>
<dbReference type="Reactome" id="R-SPO-5668599">
    <property type="pathway name" value="RHO GTPases Activate NADPH Oxidases"/>
</dbReference>
<dbReference type="Reactome" id="R-SPO-5673001">
    <property type="pathway name" value="RAF/MAP kinase cascade"/>
</dbReference>
<dbReference type="Reactome" id="R-SPO-5674135">
    <property type="pathway name" value="MAP2K and MAPK activation"/>
</dbReference>
<dbReference type="Reactome" id="R-SPO-5674499">
    <property type="pathway name" value="Negative feedback regulation of MAPK pathway"/>
</dbReference>
<dbReference type="Reactome" id="R-SPO-5675221">
    <property type="pathway name" value="Negative regulation of MAPK pathway"/>
</dbReference>
<dbReference type="Reactome" id="R-SPO-5687128">
    <property type="pathway name" value="MAPK6/MAPK4 signaling"/>
</dbReference>
<dbReference type="Reactome" id="R-SPO-6798695">
    <property type="pathway name" value="Neutrophil degranulation"/>
</dbReference>
<dbReference type="Reactome" id="R-SPO-881907">
    <property type="pathway name" value="Gastrin-CREB signalling pathway via PKC and MAPK"/>
</dbReference>
<dbReference type="Reactome" id="R-SPO-9634635">
    <property type="pathway name" value="Estrogen-stimulated signaling through PRKCZ"/>
</dbReference>
<dbReference type="Reactome" id="R-SPO-9856649">
    <property type="pathway name" value="Transcriptional and post-translational regulation of MITF-M expression and activity"/>
</dbReference>
<dbReference type="PRO" id="PR:P27638"/>
<dbReference type="Proteomes" id="UP000002485">
    <property type="component" value="Chromosome I"/>
</dbReference>
<dbReference type="GO" id="GO:0005737">
    <property type="term" value="C:cytoplasm"/>
    <property type="evidence" value="ECO:0000318"/>
    <property type="project" value="GO_Central"/>
</dbReference>
<dbReference type="GO" id="GO:0005829">
    <property type="term" value="C:cytosol"/>
    <property type="evidence" value="ECO:0007005"/>
    <property type="project" value="PomBase"/>
</dbReference>
<dbReference type="GO" id="GO:0044732">
    <property type="term" value="C:mitotic spindle pole body"/>
    <property type="evidence" value="ECO:0007005"/>
    <property type="project" value="PomBase"/>
</dbReference>
<dbReference type="GO" id="GO:0005634">
    <property type="term" value="C:nucleus"/>
    <property type="evidence" value="ECO:0000314"/>
    <property type="project" value="PomBase"/>
</dbReference>
<dbReference type="GO" id="GO:0005524">
    <property type="term" value="F:ATP binding"/>
    <property type="evidence" value="ECO:0000255"/>
    <property type="project" value="PomBase"/>
</dbReference>
<dbReference type="GO" id="GO:0004707">
    <property type="term" value="F:MAP kinase activity"/>
    <property type="evidence" value="ECO:0000314"/>
    <property type="project" value="PomBase"/>
</dbReference>
<dbReference type="GO" id="GO:0106310">
    <property type="term" value="F:protein serine kinase activity"/>
    <property type="evidence" value="ECO:0007669"/>
    <property type="project" value="RHEA"/>
</dbReference>
<dbReference type="GO" id="GO:0004674">
    <property type="term" value="F:protein serine/threonine kinase activity"/>
    <property type="evidence" value="ECO:0000318"/>
    <property type="project" value="GO_Central"/>
</dbReference>
<dbReference type="GO" id="GO:0035556">
    <property type="term" value="P:intracellular signal transduction"/>
    <property type="evidence" value="ECO:0000318"/>
    <property type="project" value="GO_Central"/>
</dbReference>
<dbReference type="GO" id="GO:0071507">
    <property type="term" value="P:pheromone response MAPK cascade"/>
    <property type="evidence" value="ECO:0000315"/>
    <property type="project" value="PomBase"/>
</dbReference>
<dbReference type="GO" id="GO:0000750">
    <property type="term" value="P:pheromone-dependent signal transduction involved in conjugation with cellular fusion"/>
    <property type="evidence" value="ECO:0000318"/>
    <property type="project" value="GO_Central"/>
</dbReference>
<dbReference type="CDD" id="cd07849">
    <property type="entry name" value="STKc_ERK1_2_like"/>
    <property type="match status" value="1"/>
</dbReference>
<dbReference type="FunFam" id="1.10.510.10:FF:000040">
    <property type="entry name" value="Mitogen-activated protein kinase"/>
    <property type="match status" value="1"/>
</dbReference>
<dbReference type="FunFam" id="3.30.200.20:FF:000073">
    <property type="entry name" value="Mitogen-activated protein kinase"/>
    <property type="match status" value="1"/>
</dbReference>
<dbReference type="Gene3D" id="3.30.200.20">
    <property type="entry name" value="Phosphorylase Kinase, domain 1"/>
    <property type="match status" value="1"/>
</dbReference>
<dbReference type="Gene3D" id="1.10.510.10">
    <property type="entry name" value="Transferase(Phosphotransferase) domain 1"/>
    <property type="match status" value="1"/>
</dbReference>
<dbReference type="InterPro" id="IPR011009">
    <property type="entry name" value="Kinase-like_dom_sf"/>
</dbReference>
<dbReference type="InterPro" id="IPR050117">
    <property type="entry name" value="MAP_kinase"/>
</dbReference>
<dbReference type="InterPro" id="IPR003527">
    <property type="entry name" value="MAP_kinase_CS"/>
</dbReference>
<dbReference type="InterPro" id="IPR008352">
    <property type="entry name" value="MAPK_p38-like"/>
</dbReference>
<dbReference type="InterPro" id="IPR000719">
    <property type="entry name" value="Prot_kinase_dom"/>
</dbReference>
<dbReference type="InterPro" id="IPR017441">
    <property type="entry name" value="Protein_kinase_ATP_BS"/>
</dbReference>
<dbReference type="InterPro" id="IPR008271">
    <property type="entry name" value="Ser/Thr_kinase_AS"/>
</dbReference>
<dbReference type="PANTHER" id="PTHR24055">
    <property type="entry name" value="MITOGEN-ACTIVATED PROTEIN KINASE"/>
    <property type="match status" value="1"/>
</dbReference>
<dbReference type="Pfam" id="PF00069">
    <property type="entry name" value="Pkinase"/>
    <property type="match status" value="1"/>
</dbReference>
<dbReference type="PRINTS" id="PR01773">
    <property type="entry name" value="P38MAPKINASE"/>
</dbReference>
<dbReference type="SMART" id="SM00220">
    <property type="entry name" value="S_TKc"/>
    <property type="match status" value="1"/>
</dbReference>
<dbReference type="SUPFAM" id="SSF56112">
    <property type="entry name" value="Protein kinase-like (PK-like)"/>
    <property type="match status" value="1"/>
</dbReference>
<dbReference type="PROSITE" id="PS01351">
    <property type="entry name" value="MAPK"/>
    <property type="match status" value="1"/>
</dbReference>
<dbReference type="PROSITE" id="PS00107">
    <property type="entry name" value="PROTEIN_KINASE_ATP"/>
    <property type="match status" value="1"/>
</dbReference>
<dbReference type="PROSITE" id="PS50011">
    <property type="entry name" value="PROTEIN_KINASE_DOM"/>
    <property type="match status" value="1"/>
</dbReference>
<dbReference type="PROSITE" id="PS00108">
    <property type="entry name" value="PROTEIN_KINASE_ST"/>
    <property type="match status" value="1"/>
</dbReference>
<feature type="chain" id="PRO_0000186340" description="Mitogen-activated protein kinase spk1">
    <location>
        <begin position="1"/>
        <end position="372"/>
    </location>
</feature>
<feature type="domain" description="Protein kinase" evidence="2">
    <location>
        <begin position="39"/>
        <end position="327"/>
    </location>
</feature>
<feature type="region of interest" description="Disordered" evidence="4">
    <location>
        <begin position="1"/>
        <end position="29"/>
    </location>
</feature>
<feature type="short sequence motif" description="TXY">
    <location>
        <begin position="199"/>
        <end position="201"/>
    </location>
</feature>
<feature type="compositionally biased region" description="Polar residues" evidence="4">
    <location>
        <begin position="1"/>
        <end position="25"/>
    </location>
</feature>
<feature type="active site" description="Proton acceptor" evidence="2 3">
    <location>
        <position position="163"/>
    </location>
</feature>
<feature type="binding site" evidence="2">
    <location>
        <begin position="45"/>
        <end position="53"/>
    </location>
    <ligand>
        <name>ATP</name>
        <dbReference type="ChEBI" id="CHEBI:30616"/>
    </ligand>
</feature>
<feature type="binding site" evidence="2">
    <location>
        <position position="68"/>
    </location>
    <ligand>
        <name>ATP</name>
        <dbReference type="ChEBI" id="CHEBI:30616"/>
    </ligand>
</feature>
<feature type="modified residue" description="Phosphothreonine" evidence="1">
    <location>
        <position position="199"/>
    </location>
</feature>
<feature type="modified residue" description="Phosphotyrosine" evidence="1">
    <location>
        <position position="201"/>
    </location>
</feature>
<name>SPK1_SCHPO</name>
<reference key="1">
    <citation type="journal article" date="1991" name="Genes Dev.">
        <title>Fission yeast genes that confer resistance to staurosporine encode an AP-1-like transcription factor and a protein kinase related to the mammalian ERK1/MAP2 and budding yeast FUS3 and KSS1 kinases.</title>
        <authorList>
            <person name="Toda T."/>
            <person name="Shimanuki M."/>
            <person name="Yanagida M."/>
        </authorList>
    </citation>
    <scope>NUCLEOTIDE SEQUENCE [GENOMIC DNA]</scope>
</reference>
<reference key="2">
    <citation type="submission" date="2002-05" db="EMBL/GenBank/DDBJ databases">
        <title>Identification of abundant polyA plus non-coding RNAs that are expressed in Schizosaccharomyces pombe.</title>
        <authorList>
            <person name="Watanabe T."/>
            <person name="Saito T.T."/>
            <person name="Nabeshima K."/>
            <person name="Nojima H."/>
        </authorList>
    </citation>
    <scope>NUCLEOTIDE SEQUENCE [MRNA]</scope>
    <source>
        <strain>CD16-1</strain>
    </source>
</reference>
<reference key="3">
    <citation type="journal article" date="2002" name="Nature">
        <title>The genome sequence of Schizosaccharomyces pombe.</title>
        <authorList>
            <person name="Wood V."/>
            <person name="Gwilliam R."/>
            <person name="Rajandream M.A."/>
            <person name="Lyne M.H."/>
            <person name="Lyne R."/>
            <person name="Stewart A."/>
            <person name="Sgouros J.G."/>
            <person name="Peat N."/>
            <person name="Hayles J."/>
            <person name="Baker S.G."/>
            <person name="Basham D."/>
            <person name="Bowman S."/>
            <person name="Brooks K."/>
            <person name="Brown D."/>
            <person name="Brown S."/>
            <person name="Chillingworth T."/>
            <person name="Churcher C.M."/>
            <person name="Collins M."/>
            <person name="Connor R."/>
            <person name="Cronin A."/>
            <person name="Davis P."/>
            <person name="Feltwell T."/>
            <person name="Fraser A."/>
            <person name="Gentles S."/>
            <person name="Goble A."/>
            <person name="Hamlin N."/>
            <person name="Harris D.E."/>
            <person name="Hidalgo J."/>
            <person name="Hodgson G."/>
            <person name="Holroyd S."/>
            <person name="Hornsby T."/>
            <person name="Howarth S."/>
            <person name="Huckle E.J."/>
            <person name="Hunt S."/>
            <person name="Jagels K."/>
            <person name="James K.D."/>
            <person name="Jones L."/>
            <person name="Jones M."/>
            <person name="Leather S."/>
            <person name="McDonald S."/>
            <person name="McLean J."/>
            <person name="Mooney P."/>
            <person name="Moule S."/>
            <person name="Mungall K.L."/>
            <person name="Murphy L.D."/>
            <person name="Niblett D."/>
            <person name="Odell C."/>
            <person name="Oliver K."/>
            <person name="O'Neil S."/>
            <person name="Pearson D."/>
            <person name="Quail M.A."/>
            <person name="Rabbinowitsch E."/>
            <person name="Rutherford K.M."/>
            <person name="Rutter S."/>
            <person name="Saunders D."/>
            <person name="Seeger K."/>
            <person name="Sharp S."/>
            <person name="Skelton J."/>
            <person name="Simmonds M.N."/>
            <person name="Squares R."/>
            <person name="Squares S."/>
            <person name="Stevens K."/>
            <person name="Taylor K."/>
            <person name="Taylor R.G."/>
            <person name="Tivey A."/>
            <person name="Walsh S.V."/>
            <person name="Warren T."/>
            <person name="Whitehead S."/>
            <person name="Woodward J.R."/>
            <person name="Volckaert G."/>
            <person name="Aert R."/>
            <person name="Robben J."/>
            <person name="Grymonprez B."/>
            <person name="Weltjens I."/>
            <person name="Vanstreels E."/>
            <person name="Rieger M."/>
            <person name="Schaefer M."/>
            <person name="Mueller-Auer S."/>
            <person name="Gabel C."/>
            <person name="Fuchs M."/>
            <person name="Duesterhoeft A."/>
            <person name="Fritzc C."/>
            <person name="Holzer E."/>
            <person name="Moestl D."/>
            <person name="Hilbert H."/>
            <person name="Borzym K."/>
            <person name="Langer I."/>
            <person name="Beck A."/>
            <person name="Lehrach H."/>
            <person name="Reinhardt R."/>
            <person name="Pohl T.M."/>
            <person name="Eger P."/>
            <person name="Zimmermann W."/>
            <person name="Wedler H."/>
            <person name="Wambutt R."/>
            <person name="Purnelle B."/>
            <person name="Goffeau A."/>
            <person name="Cadieu E."/>
            <person name="Dreano S."/>
            <person name="Gloux S."/>
            <person name="Lelaure V."/>
            <person name="Mottier S."/>
            <person name="Galibert F."/>
            <person name="Aves S.J."/>
            <person name="Xiang Z."/>
            <person name="Hunt C."/>
            <person name="Moore K."/>
            <person name="Hurst S.M."/>
            <person name="Lucas M."/>
            <person name="Rochet M."/>
            <person name="Gaillardin C."/>
            <person name="Tallada V.A."/>
            <person name="Garzon A."/>
            <person name="Thode G."/>
            <person name="Daga R.R."/>
            <person name="Cruzado L."/>
            <person name="Jimenez J."/>
            <person name="Sanchez M."/>
            <person name="del Rey F."/>
            <person name="Benito J."/>
            <person name="Dominguez A."/>
            <person name="Revuelta J.L."/>
            <person name="Moreno S."/>
            <person name="Armstrong J."/>
            <person name="Forsburg S.L."/>
            <person name="Cerutti L."/>
            <person name="Lowe T."/>
            <person name="McCombie W.R."/>
            <person name="Paulsen I."/>
            <person name="Potashkin J."/>
            <person name="Shpakovski G.V."/>
            <person name="Ussery D."/>
            <person name="Barrell B.G."/>
            <person name="Nurse P."/>
        </authorList>
    </citation>
    <scope>NUCLEOTIDE SEQUENCE [LARGE SCALE GENOMIC DNA]</scope>
    <source>
        <strain>972 / ATCC 24843</strain>
    </source>
</reference>
<reference key="4">
    <citation type="submission" date="1997-06" db="EMBL/GenBank/DDBJ databases">
        <title>S.pombe uroporphrinogen III synthase gene.</title>
        <authorList>
            <person name="Kawamukai M."/>
        </authorList>
    </citation>
    <scope>NUCLEOTIDE SEQUENCE [GENOMIC DNA] OF 286-372</scope>
</reference>
<reference key="5">
    <citation type="journal article" date="1993" name="Mol. Cell. Biol.">
        <title>Schizosaccharomyces pombe Spk1 is a tyrosine-phosphorylated protein functionally related to Xenopus mitogen-activated protein kinase.</title>
        <authorList>
            <person name="Gotoh Y."/>
            <person name="Nishida E."/>
            <person name="Shimanuki M."/>
            <person name="Toda T."/>
            <person name="Imai Y."/>
            <person name="Yamamoto M."/>
        </authorList>
    </citation>
    <scope>FUNCTION</scope>
</reference>
<organism>
    <name type="scientific">Schizosaccharomyces pombe (strain 972 / ATCC 24843)</name>
    <name type="common">Fission yeast</name>
    <dbReference type="NCBI Taxonomy" id="284812"/>
    <lineage>
        <taxon>Eukaryota</taxon>
        <taxon>Fungi</taxon>
        <taxon>Dikarya</taxon>
        <taxon>Ascomycota</taxon>
        <taxon>Taphrinomycotina</taxon>
        <taxon>Schizosaccharomycetes</taxon>
        <taxon>Schizosaccharomycetales</taxon>
        <taxon>Schizosaccharomycetaceae</taxon>
        <taxon>Schizosaccharomyces</taxon>
    </lineage>
</organism>
<protein>
    <recommendedName>
        <fullName>Mitogen-activated protein kinase spk1</fullName>
        <shortName>MAP kinase spk1</shortName>
        <shortName>MAPK</shortName>
        <ecNumber>2.7.11.24</ecNumber>
    </recommendedName>
</protein>
<keyword id="KW-0067">ATP-binding</keyword>
<keyword id="KW-0418">Kinase</keyword>
<keyword id="KW-0547">Nucleotide-binding</keyword>
<keyword id="KW-0539">Nucleus</keyword>
<keyword id="KW-0597">Phosphoprotein</keyword>
<keyword id="KW-1185">Reference proteome</keyword>
<keyword id="KW-0723">Serine/threonine-protein kinase</keyword>
<keyword id="KW-0808">Transferase</keyword>
<gene>
    <name type="primary">spk1</name>
    <name type="ORF">SPAC31G5.09c</name>
</gene>
<comment type="function">
    <text evidence="5">Involved in mating signal transduction pathway.</text>
</comment>
<comment type="catalytic activity">
    <reaction>
        <text>L-seryl-[protein] + ATP = O-phospho-L-seryl-[protein] + ADP + H(+)</text>
        <dbReference type="Rhea" id="RHEA:17989"/>
        <dbReference type="Rhea" id="RHEA-COMP:9863"/>
        <dbReference type="Rhea" id="RHEA-COMP:11604"/>
        <dbReference type="ChEBI" id="CHEBI:15378"/>
        <dbReference type="ChEBI" id="CHEBI:29999"/>
        <dbReference type="ChEBI" id="CHEBI:30616"/>
        <dbReference type="ChEBI" id="CHEBI:83421"/>
        <dbReference type="ChEBI" id="CHEBI:456216"/>
        <dbReference type="EC" id="2.7.11.24"/>
    </reaction>
</comment>
<comment type="catalytic activity">
    <reaction>
        <text>L-threonyl-[protein] + ATP = O-phospho-L-threonyl-[protein] + ADP + H(+)</text>
        <dbReference type="Rhea" id="RHEA:46608"/>
        <dbReference type="Rhea" id="RHEA-COMP:11060"/>
        <dbReference type="Rhea" id="RHEA-COMP:11605"/>
        <dbReference type="ChEBI" id="CHEBI:15378"/>
        <dbReference type="ChEBI" id="CHEBI:30013"/>
        <dbReference type="ChEBI" id="CHEBI:30616"/>
        <dbReference type="ChEBI" id="CHEBI:61977"/>
        <dbReference type="ChEBI" id="CHEBI:456216"/>
        <dbReference type="EC" id="2.7.11.24"/>
    </reaction>
</comment>
<comment type="cofactor">
    <cofactor evidence="1">
        <name>Mg(2+)</name>
        <dbReference type="ChEBI" id="CHEBI:18420"/>
    </cofactor>
</comment>
<comment type="activity regulation">
    <text>Activated by tyrosine and threonine phosphorylation.</text>
</comment>
<comment type="interaction">
    <interactant intactId="EBI-2104356">
        <id>P27638</id>
    </interactant>
    <interactant intactId="EBI-2042633">
        <id>P10506</id>
        <label>byr1</label>
    </interactant>
    <organismsDiffer>false</organismsDiffer>
    <experiments>2</experiments>
</comment>
<comment type="subcellular location">
    <subcellularLocation>
        <location>Nucleus</location>
    </subcellularLocation>
    <text>Mainly nuclear.</text>
</comment>
<comment type="domain">
    <text>The TXY motif contains the threonine and tyrosine residues whose phosphorylation activates the MAP kinases.</text>
</comment>
<comment type="PTM">
    <text evidence="1">Dually phosphorylated on Thr-199 and Tyr-201, which activates the enzyme.</text>
</comment>
<comment type="similarity">
    <text evidence="6">Belongs to the protein kinase superfamily. CMGC Ser/Thr protein kinase family. MAP kinase subfamily.</text>
</comment>
<comment type="caution">
    <text evidence="7">Was originally thought to confer resistance to staurosporine.</text>
</comment>
<sequence length="372" mass="42003">MASATSTPTIADGNSNKESVATSRSPHTHDLNFELPEEYEMINLIGQGAYGVVCAALHKPSGLKVAVKKIHPFNHPVFCLRTLREIKLLRHFRHENIISILDILPPPSYQELEDVYIVQELMETDLYRVIRSQPLSDDHCQYFTYQILRALKAMHSAGVVHRDLKPSNLLLNANCDLKVADFGLARSTTAQGGNPGFMTEYVATRWYRAPEIMLSFREYSKAIDLWSTGCILAEMLSARPLFPGKDYHSQITLILNILGTPTMDDFSRIKSARARKYIKSLPFTPKVSFKALFPQASPDAIDLLEKLLTFNPDKRITAEEALKHPYVAAYHDASDEPTASPMPPNLVDLYCNKEDLEIPVLKALIFREVNFR</sequence>